<gene>
    <name evidence="1" type="primary">thiC</name>
    <name type="ordered locus">Amet_4233</name>
</gene>
<evidence type="ECO:0000255" key="1">
    <source>
        <dbReference type="HAMAP-Rule" id="MF_00089"/>
    </source>
</evidence>
<name>THIC_ALKMQ</name>
<organism>
    <name type="scientific">Alkaliphilus metalliredigens (strain QYMF)</name>
    <dbReference type="NCBI Taxonomy" id="293826"/>
    <lineage>
        <taxon>Bacteria</taxon>
        <taxon>Bacillati</taxon>
        <taxon>Bacillota</taxon>
        <taxon>Clostridia</taxon>
        <taxon>Peptostreptococcales</taxon>
        <taxon>Natronincolaceae</taxon>
        <taxon>Alkaliphilus</taxon>
    </lineage>
</organism>
<accession>A6TVU5</accession>
<keyword id="KW-0004">4Fe-4S</keyword>
<keyword id="KW-0408">Iron</keyword>
<keyword id="KW-0411">Iron-sulfur</keyword>
<keyword id="KW-0456">Lyase</keyword>
<keyword id="KW-0479">Metal-binding</keyword>
<keyword id="KW-1185">Reference proteome</keyword>
<keyword id="KW-0949">S-adenosyl-L-methionine</keyword>
<keyword id="KW-0784">Thiamine biosynthesis</keyword>
<keyword id="KW-0862">Zinc</keyword>
<proteinExistence type="inferred from homology"/>
<comment type="function">
    <text evidence="1">Catalyzes the synthesis of the hydroxymethylpyrimidine phosphate (HMP-P) moiety of thiamine from aminoimidazole ribotide (AIR) in a radical S-adenosyl-L-methionine (SAM)-dependent reaction.</text>
</comment>
<comment type="catalytic activity">
    <reaction evidence="1">
        <text>5-amino-1-(5-phospho-beta-D-ribosyl)imidazole + S-adenosyl-L-methionine = 4-amino-2-methyl-5-(phosphooxymethyl)pyrimidine + CO + 5'-deoxyadenosine + formate + L-methionine + 3 H(+)</text>
        <dbReference type="Rhea" id="RHEA:24840"/>
        <dbReference type="ChEBI" id="CHEBI:15378"/>
        <dbReference type="ChEBI" id="CHEBI:15740"/>
        <dbReference type="ChEBI" id="CHEBI:17245"/>
        <dbReference type="ChEBI" id="CHEBI:17319"/>
        <dbReference type="ChEBI" id="CHEBI:57844"/>
        <dbReference type="ChEBI" id="CHEBI:58354"/>
        <dbReference type="ChEBI" id="CHEBI:59789"/>
        <dbReference type="ChEBI" id="CHEBI:137981"/>
        <dbReference type="EC" id="4.1.99.17"/>
    </reaction>
</comment>
<comment type="cofactor">
    <cofactor evidence="1">
        <name>[4Fe-4S] cluster</name>
        <dbReference type="ChEBI" id="CHEBI:49883"/>
    </cofactor>
    <text evidence="1">Binds 1 [4Fe-4S] cluster per subunit. The cluster is coordinated with 3 cysteines and an exchangeable S-adenosyl-L-methionine.</text>
</comment>
<comment type="pathway">
    <text evidence="1">Cofactor biosynthesis; thiamine diphosphate biosynthesis.</text>
</comment>
<comment type="similarity">
    <text evidence="1">Belongs to the ThiC family.</text>
</comment>
<dbReference type="EC" id="4.1.99.17" evidence="1"/>
<dbReference type="EMBL" id="CP000724">
    <property type="protein sequence ID" value="ABR50313.1"/>
    <property type="molecule type" value="Genomic_DNA"/>
</dbReference>
<dbReference type="RefSeq" id="WP_012065261.1">
    <property type="nucleotide sequence ID" value="NC_009633.1"/>
</dbReference>
<dbReference type="SMR" id="A6TVU5"/>
<dbReference type="STRING" id="293826.Amet_4233"/>
<dbReference type="KEGG" id="amt:Amet_4233"/>
<dbReference type="eggNOG" id="COG0422">
    <property type="taxonomic scope" value="Bacteria"/>
</dbReference>
<dbReference type="HOGENOM" id="CLU_013181_2_1_9"/>
<dbReference type="OrthoDB" id="9805897at2"/>
<dbReference type="UniPathway" id="UPA00060"/>
<dbReference type="Proteomes" id="UP000001572">
    <property type="component" value="Chromosome"/>
</dbReference>
<dbReference type="GO" id="GO:0005829">
    <property type="term" value="C:cytosol"/>
    <property type="evidence" value="ECO:0007669"/>
    <property type="project" value="TreeGrafter"/>
</dbReference>
<dbReference type="GO" id="GO:0051539">
    <property type="term" value="F:4 iron, 4 sulfur cluster binding"/>
    <property type="evidence" value="ECO:0007669"/>
    <property type="project" value="UniProtKB-KW"/>
</dbReference>
<dbReference type="GO" id="GO:0016830">
    <property type="term" value="F:carbon-carbon lyase activity"/>
    <property type="evidence" value="ECO:0007669"/>
    <property type="project" value="InterPro"/>
</dbReference>
<dbReference type="GO" id="GO:0008270">
    <property type="term" value="F:zinc ion binding"/>
    <property type="evidence" value="ECO:0007669"/>
    <property type="project" value="UniProtKB-UniRule"/>
</dbReference>
<dbReference type="GO" id="GO:0009228">
    <property type="term" value="P:thiamine biosynthetic process"/>
    <property type="evidence" value="ECO:0007669"/>
    <property type="project" value="UniProtKB-KW"/>
</dbReference>
<dbReference type="GO" id="GO:0009229">
    <property type="term" value="P:thiamine diphosphate biosynthetic process"/>
    <property type="evidence" value="ECO:0007669"/>
    <property type="project" value="UniProtKB-UniRule"/>
</dbReference>
<dbReference type="FunFam" id="3.20.20.540:FF:000001">
    <property type="entry name" value="Phosphomethylpyrimidine synthase"/>
    <property type="match status" value="1"/>
</dbReference>
<dbReference type="Gene3D" id="6.10.250.620">
    <property type="match status" value="1"/>
</dbReference>
<dbReference type="Gene3D" id="3.20.20.540">
    <property type="entry name" value="Radical SAM ThiC family, central domain"/>
    <property type="match status" value="1"/>
</dbReference>
<dbReference type="HAMAP" id="MF_00089">
    <property type="entry name" value="ThiC"/>
    <property type="match status" value="1"/>
</dbReference>
<dbReference type="InterPro" id="IPR037509">
    <property type="entry name" value="ThiC"/>
</dbReference>
<dbReference type="InterPro" id="IPR038521">
    <property type="entry name" value="ThiC/Bza_core_dom"/>
</dbReference>
<dbReference type="InterPro" id="IPR002817">
    <property type="entry name" value="ThiC/BzaA/B"/>
</dbReference>
<dbReference type="NCBIfam" id="NF009895">
    <property type="entry name" value="PRK13352.1"/>
    <property type="match status" value="1"/>
</dbReference>
<dbReference type="NCBIfam" id="TIGR00190">
    <property type="entry name" value="thiC"/>
    <property type="match status" value="1"/>
</dbReference>
<dbReference type="PANTHER" id="PTHR30557:SF1">
    <property type="entry name" value="PHOSPHOMETHYLPYRIMIDINE SYNTHASE, CHLOROPLASTIC"/>
    <property type="match status" value="1"/>
</dbReference>
<dbReference type="PANTHER" id="PTHR30557">
    <property type="entry name" value="THIAMINE BIOSYNTHESIS PROTEIN THIC"/>
    <property type="match status" value="1"/>
</dbReference>
<dbReference type="Pfam" id="PF01964">
    <property type="entry name" value="ThiC_Rad_SAM"/>
    <property type="match status" value="1"/>
</dbReference>
<dbReference type="SFLD" id="SFLDF00407">
    <property type="entry name" value="phosphomethylpyrimidine_syntha"/>
    <property type="match status" value="1"/>
</dbReference>
<dbReference type="SFLD" id="SFLDG01114">
    <property type="entry name" value="phosphomethylpyrimidine_syntha"/>
    <property type="match status" value="1"/>
</dbReference>
<dbReference type="SFLD" id="SFLDS00113">
    <property type="entry name" value="Radical_SAM_Phosphomethylpyrim"/>
    <property type="match status" value="1"/>
</dbReference>
<protein>
    <recommendedName>
        <fullName evidence="1">Phosphomethylpyrimidine synthase</fullName>
        <ecNumber evidence="1">4.1.99.17</ecNumber>
    </recommendedName>
    <alternativeName>
        <fullName evidence="1">Hydroxymethylpyrimidine phosphate synthase</fullName>
        <shortName evidence="1">HMP-P synthase</shortName>
        <shortName evidence="1">HMP-phosphate synthase</shortName>
        <shortName evidence="1">HMPP synthase</shortName>
    </alternativeName>
    <alternativeName>
        <fullName evidence="1">Thiamine biosynthesis protein ThiC</fullName>
    </alternativeName>
</protein>
<sequence>MNYTTQMDAARKGLVTKEMEAVARKEGMDIEILRERVATGKIAIPANKNHHSLDAEGIGEGLRTKINVNLGISKDCPNIEVELDKVRTALEMKAEAIMDLSSFGKTEEFRKSLIEMSPAMIGTVPIYDAVGFYDKELQDITAQEFIDVVEKHAKEGVDFVTIHAGMNQETAAVFKRNPRLTNIVSRGGSLLYAWMELNKKENPFYQYYDQLLEICEKYDVTISLGDACRPGSIHDATDASQIKELMVLGELTLRAWEKNVQVMIEGPGHMAIDEIAANMVLEKKLCHGAPFYVLGPIVTDIAPGYDHITSAIGGAIAASHGADFLCYVTPAEHLRLPTLEDMKEGIIASKIAAHAGDIAKKVPGARKWDNEMSRARQQLNWEKMFELAIDPEKARRYREESKPEHDDSCTMCGKMCSMRNMNKIMEGKNINILREDD</sequence>
<feature type="chain" id="PRO_1000057585" description="Phosphomethylpyrimidine synthase">
    <location>
        <begin position="1"/>
        <end position="437"/>
    </location>
</feature>
<feature type="binding site" evidence="1">
    <location>
        <position position="69"/>
    </location>
    <ligand>
        <name>substrate</name>
    </ligand>
</feature>
<feature type="binding site" evidence="1">
    <location>
        <position position="98"/>
    </location>
    <ligand>
        <name>substrate</name>
    </ligand>
</feature>
<feature type="binding site" evidence="1">
    <location>
        <position position="127"/>
    </location>
    <ligand>
        <name>substrate</name>
    </ligand>
</feature>
<feature type="binding site" evidence="1">
    <location>
        <position position="163"/>
    </location>
    <ligand>
        <name>substrate</name>
    </ligand>
</feature>
<feature type="binding site" evidence="1">
    <location>
        <begin position="185"/>
        <end position="187"/>
    </location>
    <ligand>
        <name>substrate</name>
    </ligand>
</feature>
<feature type="binding site" evidence="1">
    <location>
        <begin position="226"/>
        <end position="229"/>
    </location>
    <ligand>
        <name>substrate</name>
    </ligand>
</feature>
<feature type="binding site" evidence="1">
    <location>
        <position position="265"/>
    </location>
    <ligand>
        <name>substrate</name>
    </ligand>
</feature>
<feature type="binding site" evidence="1">
    <location>
        <position position="269"/>
    </location>
    <ligand>
        <name>Zn(2+)</name>
        <dbReference type="ChEBI" id="CHEBI:29105"/>
    </ligand>
</feature>
<feature type="binding site" evidence="1">
    <location>
        <position position="292"/>
    </location>
    <ligand>
        <name>substrate</name>
    </ligand>
</feature>
<feature type="binding site" evidence="1">
    <location>
        <position position="333"/>
    </location>
    <ligand>
        <name>Zn(2+)</name>
        <dbReference type="ChEBI" id="CHEBI:29105"/>
    </ligand>
</feature>
<feature type="binding site" evidence="1">
    <location>
        <position position="409"/>
    </location>
    <ligand>
        <name>[4Fe-4S] cluster</name>
        <dbReference type="ChEBI" id="CHEBI:49883"/>
        <note>4Fe-4S-S-AdoMet</note>
    </ligand>
</feature>
<feature type="binding site" evidence="1">
    <location>
        <position position="412"/>
    </location>
    <ligand>
        <name>[4Fe-4S] cluster</name>
        <dbReference type="ChEBI" id="CHEBI:49883"/>
        <note>4Fe-4S-S-AdoMet</note>
    </ligand>
</feature>
<feature type="binding site" evidence="1">
    <location>
        <position position="416"/>
    </location>
    <ligand>
        <name>[4Fe-4S] cluster</name>
        <dbReference type="ChEBI" id="CHEBI:49883"/>
        <note>4Fe-4S-S-AdoMet</note>
    </ligand>
</feature>
<reference key="1">
    <citation type="journal article" date="2016" name="Genome Announc.">
        <title>Complete genome sequence of Alkaliphilus metalliredigens strain QYMF, an alkaliphilic and metal-reducing bacterium isolated from borax-contaminated leachate ponds.</title>
        <authorList>
            <person name="Hwang C."/>
            <person name="Copeland A."/>
            <person name="Lucas S."/>
            <person name="Lapidus A."/>
            <person name="Barry K."/>
            <person name="Detter J.C."/>
            <person name="Glavina Del Rio T."/>
            <person name="Hammon N."/>
            <person name="Israni S."/>
            <person name="Dalin E."/>
            <person name="Tice H."/>
            <person name="Pitluck S."/>
            <person name="Chertkov O."/>
            <person name="Brettin T."/>
            <person name="Bruce D."/>
            <person name="Han C."/>
            <person name="Schmutz J."/>
            <person name="Larimer F."/>
            <person name="Land M.L."/>
            <person name="Hauser L."/>
            <person name="Kyrpides N."/>
            <person name="Mikhailova N."/>
            <person name="Ye Q."/>
            <person name="Zhou J."/>
            <person name="Richardson P."/>
            <person name="Fields M.W."/>
        </authorList>
    </citation>
    <scope>NUCLEOTIDE SEQUENCE [LARGE SCALE GENOMIC DNA]</scope>
    <source>
        <strain>QYMF</strain>
    </source>
</reference>